<feature type="chain" id="PRO_0000363016" description="S-adenosylmethionine synthase">
    <location>
        <begin position="1"/>
        <end position="393"/>
    </location>
</feature>
<feature type="binding site" evidence="3">
    <location>
        <position position="9"/>
    </location>
    <ligand>
        <name>Mg(2+)</name>
        <dbReference type="ChEBI" id="CHEBI:18420"/>
    </ligand>
</feature>
<feature type="binding site" description="in other chain" evidence="4">
    <location>
        <position position="15"/>
    </location>
    <ligand>
        <name>ATP</name>
        <dbReference type="ChEBI" id="CHEBI:30616"/>
        <note>ligand shared between two neighboring subunits</note>
    </ligand>
</feature>
<feature type="binding site" evidence="2">
    <location>
        <position position="43"/>
    </location>
    <ligand>
        <name>K(+)</name>
        <dbReference type="ChEBI" id="CHEBI:29103"/>
    </ligand>
</feature>
<feature type="binding site" description="in other chain" evidence="2">
    <location>
        <position position="56"/>
    </location>
    <ligand>
        <name>L-methionine</name>
        <dbReference type="ChEBI" id="CHEBI:57844"/>
        <note>ligand shared between two neighboring subunits</note>
    </ligand>
</feature>
<feature type="binding site" description="in other chain" evidence="2">
    <location>
        <position position="99"/>
    </location>
    <ligand>
        <name>L-methionine</name>
        <dbReference type="ChEBI" id="CHEBI:57844"/>
        <note>ligand shared between two neighboring subunits</note>
    </ligand>
</feature>
<feature type="binding site" description="in other chain" evidence="4">
    <location>
        <begin position="167"/>
        <end position="169"/>
    </location>
    <ligand>
        <name>ATP</name>
        <dbReference type="ChEBI" id="CHEBI:30616"/>
        <note>ligand shared between two neighboring subunits</note>
    </ligand>
</feature>
<feature type="binding site" description="in other chain" evidence="4">
    <location>
        <begin position="235"/>
        <end position="238"/>
    </location>
    <ligand>
        <name>ATP</name>
        <dbReference type="ChEBI" id="CHEBI:30616"/>
        <note>ligand shared between two neighboring subunits</note>
    </ligand>
</feature>
<feature type="binding site" description="in other chain" evidence="4">
    <location>
        <position position="246"/>
    </location>
    <ligand>
        <name>ATP</name>
        <dbReference type="ChEBI" id="CHEBI:30616"/>
        <note>ligand shared between two neighboring subunits</note>
    </ligand>
</feature>
<feature type="binding site" evidence="2">
    <location>
        <position position="246"/>
    </location>
    <ligand>
        <name>L-methionine</name>
        <dbReference type="ChEBI" id="CHEBI:57844"/>
        <note>ligand shared between two neighboring subunits</note>
    </ligand>
</feature>
<feature type="binding site" description="in other chain" evidence="2">
    <location>
        <begin position="252"/>
        <end position="253"/>
    </location>
    <ligand>
        <name>ATP</name>
        <dbReference type="ChEBI" id="CHEBI:30616"/>
        <note>ligand shared between two neighboring subunits</note>
    </ligand>
</feature>
<feature type="binding site" evidence="2">
    <location>
        <position position="269"/>
    </location>
    <ligand>
        <name>ATP</name>
        <dbReference type="ChEBI" id="CHEBI:30616"/>
        <note>ligand shared between two neighboring subunits</note>
    </ligand>
</feature>
<feature type="binding site" evidence="2">
    <location>
        <position position="273"/>
    </location>
    <ligand>
        <name>ATP</name>
        <dbReference type="ChEBI" id="CHEBI:30616"/>
        <note>ligand shared between two neighboring subunits</note>
    </ligand>
</feature>
<feature type="binding site" evidence="3">
    <location>
        <position position="277"/>
    </location>
    <ligand>
        <name>ATP</name>
        <dbReference type="ChEBI" id="CHEBI:30616"/>
        <note>ligand shared between two neighboring subunits</note>
    </ligand>
</feature>
<feature type="binding site" description="in other chain" evidence="2">
    <location>
        <position position="277"/>
    </location>
    <ligand>
        <name>L-methionine</name>
        <dbReference type="ChEBI" id="CHEBI:57844"/>
        <note>ligand shared between two neighboring subunits</note>
    </ligand>
</feature>
<organism>
    <name type="scientific">Camellia sinensis</name>
    <name type="common">Tea plant</name>
    <name type="synonym">Thea sinensis</name>
    <dbReference type="NCBI Taxonomy" id="4442"/>
    <lineage>
        <taxon>Eukaryota</taxon>
        <taxon>Viridiplantae</taxon>
        <taxon>Streptophyta</taxon>
        <taxon>Embryophyta</taxon>
        <taxon>Tracheophyta</taxon>
        <taxon>Spermatophyta</taxon>
        <taxon>Magnoliopsida</taxon>
        <taxon>eudicotyledons</taxon>
        <taxon>Gunneridae</taxon>
        <taxon>Pentapetalae</taxon>
        <taxon>asterids</taxon>
        <taxon>Ericales</taxon>
        <taxon>Theaceae</taxon>
        <taxon>Camellia</taxon>
    </lineage>
</organism>
<reference key="1">
    <citation type="submission" date="2000-03" db="EMBL/GenBank/DDBJ databases">
        <title>Cloning of S-adenosylmethionine synthetase gene in tea plant.</title>
        <authorList>
            <person name="Feng Y.F."/>
            <person name="Liang Y.R."/>
        </authorList>
    </citation>
    <scope>NUCLEOTIDE SEQUENCE [GENOMIC DNA]</scope>
</reference>
<reference key="2">
    <citation type="submission" date="2000-04" db="EMBL/GenBank/DDBJ databases">
        <title>S-adenosylmethionine synthetase gene.</title>
        <authorList>
            <person name="Feng Y.F."/>
            <person name="Liang Y.R."/>
        </authorList>
    </citation>
    <scope>NUCLEOTIDE SEQUENCE [MRNA]</scope>
    <source>
        <tissue>Leaf</tissue>
    </source>
</reference>
<protein>
    <recommendedName>
        <fullName>S-adenosylmethionine synthase</fullName>
        <shortName>AdoMet synthase</shortName>
        <ecNumber evidence="5">2.5.1.6</ecNumber>
    </recommendedName>
    <alternativeName>
        <fullName>Methionine adenosyltransferase</fullName>
        <shortName>MAT</shortName>
    </alternativeName>
</protein>
<sequence length="393" mass="42800">METFLFTSESVNEGHPDKLCDQISDAVLDACLEQDQDSKVACETCTKTNMVMVFGEITTKAAVDYEKIVRDTCRTIGFVSDDVGLDADNCKVLVNIEQQSPDIAQGVHGHLTKRPEEIGAGDQGHMFGYATDETSELMPLSHVLATKLGARLTEVRKNGTCPWLRPDGKTQVTVEYYNEKGATVPIRVHTLLISTQHDETVTNDEIAADLKEHVIKPVIPDKYLDEKTIFHLNPSGRFVIGGPHGDAGLTGRKIIIDTYGGWGAHGGGAFSGKDPTKVDRSGAYIVRQAAKSIVANGLARRCIVQVSYAIGVPEPLSVFVDTYGTGKIPDKEILKIVKESFDFRPGMIAINLDLKRGGNSRFLKTAAYGHFGRDDPDFTWESGEAPQVGQTSS</sequence>
<dbReference type="EC" id="2.5.1.6" evidence="5"/>
<dbReference type="EMBL" id="AJ277206">
    <property type="protein sequence ID" value="CAB83039.1"/>
    <property type="molecule type" value="Genomic_DNA"/>
</dbReference>
<dbReference type="EMBL" id="AB041534">
    <property type="protein sequence ID" value="BAA94605.1"/>
    <property type="molecule type" value="mRNA"/>
</dbReference>
<dbReference type="SMR" id="Q9LDQ7"/>
<dbReference type="UniPathway" id="UPA00315">
    <property type="reaction ID" value="UER00080"/>
</dbReference>
<dbReference type="GO" id="GO:0005737">
    <property type="term" value="C:cytoplasm"/>
    <property type="evidence" value="ECO:0007669"/>
    <property type="project" value="UniProtKB-SubCell"/>
</dbReference>
<dbReference type="GO" id="GO:0005524">
    <property type="term" value="F:ATP binding"/>
    <property type="evidence" value="ECO:0007669"/>
    <property type="project" value="UniProtKB-KW"/>
</dbReference>
<dbReference type="GO" id="GO:0046872">
    <property type="term" value="F:metal ion binding"/>
    <property type="evidence" value="ECO:0007669"/>
    <property type="project" value="UniProtKB-KW"/>
</dbReference>
<dbReference type="GO" id="GO:0004478">
    <property type="term" value="F:methionine adenosyltransferase activity"/>
    <property type="evidence" value="ECO:0007669"/>
    <property type="project" value="UniProtKB-EC"/>
</dbReference>
<dbReference type="GO" id="GO:0006730">
    <property type="term" value="P:one-carbon metabolic process"/>
    <property type="evidence" value="ECO:0007669"/>
    <property type="project" value="UniProtKB-KW"/>
</dbReference>
<dbReference type="GO" id="GO:0006556">
    <property type="term" value="P:S-adenosylmethionine biosynthetic process"/>
    <property type="evidence" value="ECO:0007669"/>
    <property type="project" value="UniProtKB-UniPathway"/>
</dbReference>
<dbReference type="CDD" id="cd18079">
    <property type="entry name" value="S-AdoMet_synt"/>
    <property type="match status" value="1"/>
</dbReference>
<dbReference type="FunFam" id="3.30.300.10:FF:000001">
    <property type="entry name" value="S-adenosylmethionine synthase"/>
    <property type="match status" value="1"/>
</dbReference>
<dbReference type="FunFam" id="3.30.300.10:FF:000003">
    <property type="entry name" value="S-adenosylmethionine synthase"/>
    <property type="match status" value="1"/>
</dbReference>
<dbReference type="FunFam" id="3.30.300.10:FF:000004">
    <property type="entry name" value="S-adenosylmethionine synthase"/>
    <property type="match status" value="1"/>
</dbReference>
<dbReference type="Gene3D" id="3.30.300.10">
    <property type="match status" value="3"/>
</dbReference>
<dbReference type="HAMAP" id="MF_00086">
    <property type="entry name" value="S_AdoMet_synth1"/>
    <property type="match status" value="1"/>
</dbReference>
<dbReference type="InterPro" id="IPR022631">
    <property type="entry name" value="ADOMET_SYNTHASE_CS"/>
</dbReference>
<dbReference type="InterPro" id="IPR022630">
    <property type="entry name" value="S-AdoMet_synt_C"/>
</dbReference>
<dbReference type="InterPro" id="IPR022629">
    <property type="entry name" value="S-AdoMet_synt_central"/>
</dbReference>
<dbReference type="InterPro" id="IPR022628">
    <property type="entry name" value="S-AdoMet_synt_N"/>
</dbReference>
<dbReference type="InterPro" id="IPR002133">
    <property type="entry name" value="S-AdoMet_synthetase"/>
</dbReference>
<dbReference type="InterPro" id="IPR022636">
    <property type="entry name" value="S-AdoMet_synthetase_sfam"/>
</dbReference>
<dbReference type="NCBIfam" id="TIGR01034">
    <property type="entry name" value="metK"/>
    <property type="match status" value="1"/>
</dbReference>
<dbReference type="PANTHER" id="PTHR11964">
    <property type="entry name" value="S-ADENOSYLMETHIONINE SYNTHETASE"/>
    <property type="match status" value="1"/>
</dbReference>
<dbReference type="Pfam" id="PF02773">
    <property type="entry name" value="S-AdoMet_synt_C"/>
    <property type="match status" value="1"/>
</dbReference>
<dbReference type="Pfam" id="PF02772">
    <property type="entry name" value="S-AdoMet_synt_M"/>
    <property type="match status" value="1"/>
</dbReference>
<dbReference type="Pfam" id="PF00438">
    <property type="entry name" value="S-AdoMet_synt_N"/>
    <property type="match status" value="1"/>
</dbReference>
<dbReference type="PIRSF" id="PIRSF000497">
    <property type="entry name" value="MAT"/>
    <property type="match status" value="1"/>
</dbReference>
<dbReference type="SUPFAM" id="SSF55973">
    <property type="entry name" value="S-adenosylmethionine synthetase"/>
    <property type="match status" value="3"/>
</dbReference>
<dbReference type="PROSITE" id="PS00376">
    <property type="entry name" value="ADOMET_SYNTHASE_1"/>
    <property type="match status" value="1"/>
</dbReference>
<dbReference type="PROSITE" id="PS00377">
    <property type="entry name" value="ADOMET_SYNTHASE_2"/>
    <property type="match status" value="1"/>
</dbReference>
<gene>
    <name type="primary">SAM</name>
</gene>
<comment type="function">
    <text evidence="5">Catalyzes the formation of S-adenosylmethionine from methionine and ATP. The reaction comprises two steps that are both catalyzed by the same enzyme: formation of S-adenosylmethionine (AdoMet) and triphosphate, and subsequent hydrolysis of the triphosphate.</text>
</comment>
<comment type="catalytic activity">
    <reaction evidence="5">
        <text>L-methionine + ATP + H2O = S-adenosyl-L-methionine + phosphate + diphosphate</text>
        <dbReference type="Rhea" id="RHEA:21080"/>
        <dbReference type="ChEBI" id="CHEBI:15377"/>
        <dbReference type="ChEBI" id="CHEBI:30616"/>
        <dbReference type="ChEBI" id="CHEBI:33019"/>
        <dbReference type="ChEBI" id="CHEBI:43474"/>
        <dbReference type="ChEBI" id="CHEBI:57844"/>
        <dbReference type="ChEBI" id="CHEBI:59789"/>
        <dbReference type="EC" id="2.5.1.6"/>
    </reaction>
</comment>
<comment type="cofactor">
    <cofactor evidence="5">
        <name>Mn(2+)</name>
        <dbReference type="ChEBI" id="CHEBI:29035"/>
    </cofactor>
    <cofactor evidence="5">
        <name>Mg(2+)</name>
        <dbReference type="ChEBI" id="CHEBI:18420"/>
    </cofactor>
    <cofactor evidence="5">
        <name>Co(2+)</name>
        <dbReference type="ChEBI" id="CHEBI:48828"/>
    </cofactor>
    <text evidence="3 5">Binds 2 divalent ions per subunit. The metal ions interact primarily with the substrate (By similarity). Can utilize magnesium, manganese or cobalt (in vitro) (By similarity).</text>
</comment>
<comment type="cofactor">
    <cofactor evidence="5">
        <name>K(+)</name>
        <dbReference type="ChEBI" id="CHEBI:29103"/>
    </cofactor>
    <text evidence="3">Binds 1 potassium ion per subunit. The potassium ion interacts primarily with the substrate (By similarity).</text>
</comment>
<comment type="pathway">
    <text evidence="5">Amino-acid biosynthesis; S-adenosyl-L-methionine biosynthesis; S-adenosyl-L-methionine from L-methionine: step 1/1.</text>
</comment>
<comment type="subunit">
    <text evidence="1">Homotetramer.</text>
</comment>
<comment type="subcellular location">
    <subcellularLocation>
        <location evidence="1">Cytoplasm</location>
    </subcellularLocation>
</comment>
<comment type="similarity">
    <text evidence="6">Belongs to the AdoMet synthase family.</text>
</comment>
<proteinExistence type="evidence at transcript level"/>
<name>METK_CAMSI</name>
<accession>Q9LDQ7</accession>
<evidence type="ECO:0000250" key="1"/>
<evidence type="ECO:0000250" key="2">
    <source>
        <dbReference type="UniProtKB" id="P0A817"/>
    </source>
</evidence>
<evidence type="ECO:0000250" key="3">
    <source>
        <dbReference type="UniProtKB" id="P13444"/>
    </source>
</evidence>
<evidence type="ECO:0000250" key="4">
    <source>
        <dbReference type="UniProtKB" id="Q00266"/>
    </source>
</evidence>
<evidence type="ECO:0000250" key="5">
    <source>
        <dbReference type="UniProtKB" id="Q96551"/>
    </source>
</evidence>
<evidence type="ECO:0000305" key="6"/>
<keyword id="KW-0067">ATP-binding</keyword>
<keyword id="KW-0170">Cobalt</keyword>
<keyword id="KW-0963">Cytoplasm</keyword>
<keyword id="KW-0460">Magnesium</keyword>
<keyword id="KW-0479">Metal-binding</keyword>
<keyword id="KW-0547">Nucleotide-binding</keyword>
<keyword id="KW-0554">One-carbon metabolism</keyword>
<keyword id="KW-0630">Potassium</keyword>
<keyword id="KW-0808">Transferase</keyword>